<proteinExistence type="inferred from homology"/>
<comment type="function">
    <text evidence="1">Cell wall formation. Catalyzes the transfer of a GlcNAc subunit on undecaprenyl-pyrophosphoryl-MurNAc-pentapeptide (lipid intermediate I) to form undecaprenyl-pyrophosphoryl-MurNAc-(pentapeptide)GlcNAc (lipid intermediate II).</text>
</comment>
<comment type="catalytic activity">
    <reaction evidence="1">
        <text>di-trans,octa-cis-undecaprenyl diphospho-N-acetyl-alpha-D-muramoyl-L-alanyl-D-glutamyl-meso-2,6-diaminopimeloyl-D-alanyl-D-alanine + UDP-N-acetyl-alpha-D-glucosamine = di-trans,octa-cis-undecaprenyl diphospho-[N-acetyl-alpha-D-glucosaminyl-(1-&gt;4)]-N-acetyl-alpha-D-muramoyl-L-alanyl-D-glutamyl-meso-2,6-diaminopimeloyl-D-alanyl-D-alanine + UDP + H(+)</text>
        <dbReference type="Rhea" id="RHEA:31227"/>
        <dbReference type="ChEBI" id="CHEBI:15378"/>
        <dbReference type="ChEBI" id="CHEBI:57705"/>
        <dbReference type="ChEBI" id="CHEBI:58223"/>
        <dbReference type="ChEBI" id="CHEBI:61387"/>
        <dbReference type="ChEBI" id="CHEBI:61388"/>
        <dbReference type="EC" id="2.4.1.227"/>
    </reaction>
</comment>
<comment type="pathway">
    <text evidence="1">Cell wall biogenesis; peptidoglycan biosynthesis.</text>
</comment>
<comment type="subcellular location">
    <subcellularLocation>
        <location evidence="1">Cell membrane</location>
        <topology evidence="1">Peripheral membrane protein</topology>
        <orientation evidence="1">Cytoplasmic side</orientation>
    </subcellularLocation>
</comment>
<comment type="similarity">
    <text evidence="1">Belongs to the glycosyltransferase 28 family. MurG subfamily.</text>
</comment>
<organism>
    <name type="scientific">Bacillus thuringiensis subsp. konkukian (strain 97-27)</name>
    <dbReference type="NCBI Taxonomy" id="281309"/>
    <lineage>
        <taxon>Bacteria</taxon>
        <taxon>Bacillati</taxon>
        <taxon>Bacillota</taxon>
        <taxon>Bacilli</taxon>
        <taxon>Bacillales</taxon>
        <taxon>Bacillaceae</taxon>
        <taxon>Bacillus</taxon>
        <taxon>Bacillus cereus group</taxon>
    </lineage>
</organism>
<reference key="1">
    <citation type="journal article" date="2006" name="J. Bacteriol.">
        <title>Pathogenomic sequence analysis of Bacillus cereus and Bacillus thuringiensis isolates closely related to Bacillus anthracis.</title>
        <authorList>
            <person name="Han C.S."/>
            <person name="Xie G."/>
            <person name="Challacombe J.F."/>
            <person name="Altherr M.R."/>
            <person name="Bhotika S.S."/>
            <person name="Bruce D."/>
            <person name="Campbell C.S."/>
            <person name="Campbell M.L."/>
            <person name="Chen J."/>
            <person name="Chertkov O."/>
            <person name="Cleland C."/>
            <person name="Dimitrijevic M."/>
            <person name="Doggett N.A."/>
            <person name="Fawcett J.J."/>
            <person name="Glavina T."/>
            <person name="Goodwin L.A."/>
            <person name="Hill K.K."/>
            <person name="Hitchcock P."/>
            <person name="Jackson P.J."/>
            <person name="Keim P."/>
            <person name="Kewalramani A.R."/>
            <person name="Longmire J."/>
            <person name="Lucas S."/>
            <person name="Malfatti S."/>
            <person name="McMurry K."/>
            <person name="Meincke L.J."/>
            <person name="Misra M."/>
            <person name="Moseman B.L."/>
            <person name="Mundt M."/>
            <person name="Munk A.C."/>
            <person name="Okinaka R.T."/>
            <person name="Parson-Quintana B."/>
            <person name="Reilly L.P."/>
            <person name="Richardson P."/>
            <person name="Robinson D.L."/>
            <person name="Rubin E."/>
            <person name="Saunders E."/>
            <person name="Tapia R."/>
            <person name="Tesmer J.G."/>
            <person name="Thayer N."/>
            <person name="Thompson L.S."/>
            <person name="Tice H."/>
            <person name="Ticknor L.O."/>
            <person name="Wills P.L."/>
            <person name="Brettin T.S."/>
            <person name="Gilna P."/>
        </authorList>
    </citation>
    <scope>NUCLEOTIDE SEQUENCE [LARGE SCALE GENOMIC DNA]</scope>
    <source>
        <strain>97-27</strain>
    </source>
</reference>
<accession>Q6HDR3</accession>
<feature type="chain" id="PRO_0000225028" description="UDP-N-acetylglucosamine--N-acetylmuramyl-(pentapeptide) pyrophosphoryl-undecaprenol N-acetylglucosamine transferase 2">
    <location>
        <begin position="1"/>
        <end position="352"/>
    </location>
</feature>
<feature type="binding site" evidence="1">
    <location>
        <begin position="11"/>
        <end position="13"/>
    </location>
    <ligand>
        <name>UDP-N-acetyl-alpha-D-glucosamine</name>
        <dbReference type="ChEBI" id="CHEBI:57705"/>
    </ligand>
</feature>
<feature type="binding site" evidence="1">
    <location>
        <position position="164"/>
    </location>
    <ligand>
        <name>UDP-N-acetyl-alpha-D-glucosamine</name>
        <dbReference type="ChEBI" id="CHEBI:57705"/>
    </ligand>
</feature>
<feature type="binding site" evidence="1">
    <location>
        <position position="194"/>
    </location>
    <ligand>
        <name>UDP-N-acetyl-alpha-D-glucosamine</name>
        <dbReference type="ChEBI" id="CHEBI:57705"/>
    </ligand>
</feature>
<feature type="binding site" evidence="1">
    <location>
        <position position="289"/>
    </location>
    <ligand>
        <name>UDP-N-acetyl-alpha-D-glucosamine</name>
        <dbReference type="ChEBI" id="CHEBI:57705"/>
    </ligand>
</feature>
<dbReference type="EC" id="2.4.1.227" evidence="1"/>
<dbReference type="EMBL" id="AE017355">
    <property type="protein sequence ID" value="AAT60794.1"/>
    <property type="molecule type" value="Genomic_DNA"/>
</dbReference>
<dbReference type="RefSeq" id="YP_038313.1">
    <property type="nucleotide sequence ID" value="NC_005957.1"/>
</dbReference>
<dbReference type="SMR" id="Q6HDR3"/>
<dbReference type="CAZy" id="GT28">
    <property type="family name" value="Glycosyltransferase Family 28"/>
</dbReference>
<dbReference type="KEGG" id="btk:BT9727_3994"/>
<dbReference type="PATRIC" id="fig|281309.8.peg.4259"/>
<dbReference type="HOGENOM" id="CLU_037404_0_0_9"/>
<dbReference type="UniPathway" id="UPA00219"/>
<dbReference type="Proteomes" id="UP000001301">
    <property type="component" value="Chromosome"/>
</dbReference>
<dbReference type="GO" id="GO:0005886">
    <property type="term" value="C:plasma membrane"/>
    <property type="evidence" value="ECO:0007669"/>
    <property type="project" value="UniProtKB-SubCell"/>
</dbReference>
<dbReference type="GO" id="GO:0051991">
    <property type="term" value="F:UDP-N-acetyl-D-glucosamine:N-acetylmuramoyl-L-alanyl-D-glutamyl-meso-2,6-diaminopimelyl-D-alanyl-D-alanine-diphosphoundecaprenol 4-beta-N-acetylglucosaminlytransferase activity"/>
    <property type="evidence" value="ECO:0007669"/>
    <property type="project" value="RHEA"/>
</dbReference>
<dbReference type="GO" id="GO:0050511">
    <property type="term" value="F:undecaprenyldiphospho-muramoylpentapeptide beta-N-acetylglucosaminyltransferase activity"/>
    <property type="evidence" value="ECO:0007669"/>
    <property type="project" value="UniProtKB-UniRule"/>
</dbReference>
<dbReference type="GO" id="GO:0005975">
    <property type="term" value="P:carbohydrate metabolic process"/>
    <property type="evidence" value="ECO:0007669"/>
    <property type="project" value="InterPro"/>
</dbReference>
<dbReference type="GO" id="GO:0051301">
    <property type="term" value="P:cell division"/>
    <property type="evidence" value="ECO:0007669"/>
    <property type="project" value="UniProtKB-KW"/>
</dbReference>
<dbReference type="GO" id="GO:0071555">
    <property type="term" value="P:cell wall organization"/>
    <property type="evidence" value="ECO:0007669"/>
    <property type="project" value="UniProtKB-KW"/>
</dbReference>
<dbReference type="GO" id="GO:0030259">
    <property type="term" value="P:lipid glycosylation"/>
    <property type="evidence" value="ECO:0007669"/>
    <property type="project" value="UniProtKB-UniRule"/>
</dbReference>
<dbReference type="GO" id="GO:0009252">
    <property type="term" value="P:peptidoglycan biosynthetic process"/>
    <property type="evidence" value="ECO:0007669"/>
    <property type="project" value="UniProtKB-UniRule"/>
</dbReference>
<dbReference type="GO" id="GO:0008360">
    <property type="term" value="P:regulation of cell shape"/>
    <property type="evidence" value="ECO:0007669"/>
    <property type="project" value="UniProtKB-KW"/>
</dbReference>
<dbReference type="CDD" id="cd03785">
    <property type="entry name" value="GT28_MurG"/>
    <property type="match status" value="1"/>
</dbReference>
<dbReference type="Gene3D" id="3.40.50.2000">
    <property type="entry name" value="Glycogen Phosphorylase B"/>
    <property type="match status" value="2"/>
</dbReference>
<dbReference type="HAMAP" id="MF_00033">
    <property type="entry name" value="MurG"/>
    <property type="match status" value="1"/>
</dbReference>
<dbReference type="InterPro" id="IPR006009">
    <property type="entry name" value="GlcNAc_MurG"/>
</dbReference>
<dbReference type="InterPro" id="IPR007235">
    <property type="entry name" value="Glyco_trans_28_C"/>
</dbReference>
<dbReference type="InterPro" id="IPR004276">
    <property type="entry name" value="GlycoTrans_28_N"/>
</dbReference>
<dbReference type="NCBIfam" id="TIGR01133">
    <property type="entry name" value="murG"/>
    <property type="match status" value="1"/>
</dbReference>
<dbReference type="NCBIfam" id="NF009102">
    <property type="entry name" value="PRK12446.1"/>
    <property type="match status" value="1"/>
</dbReference>
<dbReference type="PANTHER" id="PTHR21015:SF27">
    <property type="entry name" value="UDP-N-ACETYLGLUCOSAMINE--N-ACETYLMURAMYL-(PENTAPEPTIDE) PYROPHOSPHORYL-UNDECAPRENOL N-ACETYLGLUCOSAMINE TRANSFERASE"/>
    <property type="match status" value="1"/>
</dbReference>
<dbReference type="PANTHER" id="PTHR21015">
    <property type="entry name" value="UDP-N-ACETYLGLUCOSAMINE--N-ACETYLMURAMYL-(PENTAPEPTIDE) PYROPHOSPHORYL-UNDECAPRENOL N-ACETYLGLUCOSAMINE TRANSFERASE 1"/>
    <property type="match status" value="1"/>
</dbReference>
<dbReference type="Pfam" id="PF04101">
    <property type="entry name" value="Glyco_tran_28_C"/>
    <property type="match status" value="1"/>
</dbReference>
<dbReference type="Pfam" id="PF03033">
    <property type="entry name" value="Glyco_transf_28"/>
    <property type="match status" value="1"/>
</dbReference>
<dbReference type="SUPFAM" id="SSF53756">
    <property type="entry name" value="UDP-Glycosyltransferase/glycogen phosphorylase"/>
    <property type="match status" value="1"/>
</dbReference>
<sequence length="352" mass="39507">MKKIVFTGGGSAGHVTPNLAIIPYLKEDNWDISYIGSHQGIEKTIIEKEDIPYYSIASGKLRRYFDLKNIKDPFLVMKGVMDAYVRIRKLKPDVIFSKGGFVSVPVVIGGWLNRVPVLLHESDMTPGLANKIALRFASKIFVTFEEAAKHLPKEKVIYTGSPVREEVLKGNREKALAFLGFSRKKPVITIMGGSLGAKKINETVREALPELLRKYQIVHLCGKGNLDDSLQNKEGYRQFEYVHGELPDILAITDFVISRAGSNAIFEFLTLQKPMLLIPLSKFASRGDQILNAESFERQGYASVLYEEDVTVNSLIKHVEELSHNNEAYKTALKKYNGKEAIQTIIHHISEA</sequence>
<keyword id="KW-0131">Cell cycle</keyword>
<keyword id="KW-0132">Cell division</keyword>
<keyword id="KW-1003">Cell membrane</keyword>
<keyword id="KW-0133">Cell shape</keyword>
<keyword id="KW-0961">Cell wall biogenesis/degradation</keyword>
<keyword id="KW-0328">Glycosyltransferase</keyword>
<keyword id="KW-0472">Membrane</keyword>
<keyword id="KW-0573">Peptidoglycan synthesis</keyword>
<keyword id="KW-0808">Transferase</keyword>
<gene>
    <name evidence="1" type="primary">murG2</name>
    <name type="ordered locus">BT9727_3994</name>
</gene>
<name>MURG2_BACHK</name>
<protein>
    <recommendedName>
        <fullName evidence="1">UDP-N-acetylglucosamine--N-acetylmuramyl-(pentapeptide) pyrophosphoryl-undecaprenol N-acetylglucosamine transferase 2</fullName>
        <ecNumber evidence="1">2.4.1.227</ecNumber>
    </recommendedName>
    <alternativeName>
        <fullName evidence="1">Undecaprenyl-PP-MurNAc-pentapeptide-UDPGlcNAc GlcNAc transferase 2</fullName>
    </alternativeName>
</protein>
<evidence type="ECO:0000255" key="1">
    <source>
        <dbReference type="HAMAP-Rule" id="MF_00033"/>
    </source>
</evidence>